<dbReference type="EMBL" id="AP009240">
    <property type="protein sequence ID" value="BAG78468.1"/>
    <property type="molecule type" value="Genomic_DNA"/>
</dbReference>
<dbReference type="RefSeq" id="WP_000906486.1">
    <property type="nucleotide sequence ID" value="NC_011415.1"/>
</dbReference>
<dbReference type="SMR" id="B6I682"/>
<dbReference type="GeneID" id="98389839"/>
<dbReference type="KEGG" id="ecy:ECSE_2944"/>
<dbReference type="HOGENOM" id="CLU_164837_2_1_6"/>
<dbReference type="Proteomes" id="UP000008199">
    <property type="component" value="Chromosome"/>
</dbReference>
<dbReference type="GO" id="GO:0005829">
    <property type="term" value="C:cytosol"/>
    <property type="evidence" value="ECO:0007669"/>
    <property type="project" value="TreeGrafter"/>
</dbReference>
<dbReference type="GO" id="GO:0048027">
    <property type="term" value="F:mRNA 5'-UTR binding"/>
    <property type="evidence" value="ECO:0007669"/>
    <property type="project" value="UniProtKB-UniRule"/>
</dbReference>
<dbReference type="GO" id="GO:0006402">
    <property type="term" value="P:mRNA catabolic process"/>
    <property type="evidence" value="ECO:0007669"/>
    <property type="project" value="InterPro"/>
</dbReference>
<dbReference type="GO" id="GO:0045947">
    <property type="term" value="P:negative regulation of translational initiation"/>
    <property type="evidence" value="ECO:0007669"/>
    <property type="project" value="UniProtKB-UniRule"/>
</dbReference>
<dbReference type="GO" id="GO:0045948">
    <property type="term" value="P:positive regulation of translational initiation"/>
    <property type="evidence" value="ECO:0007669"/>
    <property type="project" value="UniProtKB-UniRule"/>
</dbReference>
<dbReference type="GO" id="GO:0006109">
    <property type="term" value="P:regulation of carbohydrate metabolic process"/>
    <property type="evidence" value="ECO:0007669"/>
    <property type="project" value="UniProtKB-UniRule"/>
</dbReference>
<dbReference type="FunFam" id="2.60.40.4380:FF:000001">
    <property type="entry name" value="Translational regulator CsrA"/>
    <property type="match status" value="1"/>
</dbReference>
<dbReference type="Gene3D" id="2.60.40.4380">
    <property type="entry name" value="Translational regulator CsrA"/>
    <property type="match status" value="1"/>
</dbReference>
<dbReference type="HAMAP" id="MF_00167">
    <property type="entry name" value="CsrA"/>
    <property type="match status" value="1"/>
</dbReference>
<dbReference type="InterPro" id="IPR003751">
    <property type="entry name" value="CsrA"/>
</dbReference>
<dbReference type="InterPro" id="IPR036107">
    <property type="entry name" value="CsrA_sf"/>
</dbReference>
<dbReference type="NCBIfam" id="TIGR00202">
    <property type="entry name" value="csrA"/>
    <property type="match status" value="1"/>
</dbReference>
<dbReference type="NCBIfam" id="NF002469">
    <property type="entry name" value="PRK01712.1"/>
    <property type="match status" value="1"/>
</dbReference>
<dbReference type="PANTHER" id="PTHR34984">
    <property type="entry name" value="CARBON STORAGE REGULATOR"/>
    <property type="match status" value="1"/>
</dbReference>
<dbReference type="PANTHER" id="PTHR34984:SF1">
    <property type="entry name" value="CARBON STORAGE REGULATOR"/>
    <property type="match status" value="1"/>
</dbReference>
<dbReference type="Pfam" id="PF02599">
    <property type="entry name" value="CsrA"/>
    <property type="match status" value="1"/>
</dbReference>
<dbReference type="SUPFAM" id="SSF117130">
    <property type="entry name" value="CsrA-like"/>
    <property type="match status" value="1"/>
</dbReference>
<organism>
    <name type="scientific">Escherichia coli (strain SE11)</name>
    <dbReference type="NCBI Taxonomy" id="409438"/>
    <lineage>
        <taxon>Bacteria</taxon>
        <taxon>Pseudomonadati</taxon>
        <taxon>Pseudomonadota</taxon>
        <taxon>Gammaproteobacteria</taxon>
        <taxon>Enterobacterales</taxon>
        <taxon>Enterobacteriaceae</taxon>
        <taxon>Escherichia</taxon>
    </lineage>
</organism>
<proteinExistence type="inferred from homology"/>
<feature type="chain" id="PRO_1000097490" description="Translational regulator CsrA">
    <location>
        <begin position="1"/>
        <end position="61"/>
    </location>
</feature>
<reference key="1">
    <citation type="journal article" date="2008" name="DNA Res.">
        <title>Complete genome sequence and comparative analysis of the wild-type commensal Escherichia coli strain SE11 isolated from a healthy adult.</title>
        <authorList>
            <person name="Oshima K."/>
            <person name="Toh H."/>
            <person name="Ogura Y."/>
            <person name="Sasamoto H."/>
            <person name="Morita H."/>
            <person name="Park S.-H."/>
            <person name="Ooka T."/>
            <person name="Iyoda S."/>
            <person name="Taylor T.D."/>
            <person name="Hayashi T."/>
            <person name="Itoh K."/>
            <person name="Hattori M."/>
        </authorList>
    </citation>
    <scope>NUCLEOTIDE SEQUENCE [LARGE SCALE GENOMIC DNA]</scope>
    <source>
        <strain>SE11</strain>
    </source>
</reference>
<name>CSRA_ECOSE</name>
<sequence>MLILTRRVGETLMIGDEVTVTVLGVKGNQVRIGVNAPKEVSVHREEIYQRIQAEKSQQSSY</sequence>
<accession>B6I682</accession>
<comment type="function">
    <text evidence="1">A key translational regulator that binds mRNA to regulate translation initiation and/or mRNA stability. Mediates global changes in gene expression, shifting from rapid growth to stress survival by linking envelope stress, the stringent response and the catabolite repression systems. Usually binds in the 5'-UTR; binding at or near the Shine-Dalgarno sequence prevents ribosome-binding, repressing translation, binding elsewhere in the 5'-UTR can activate translation and/or stabilize the mRNA. Its function is antagonized by small RNA(s).</text>
</comment>
<comment type="subunit">
    <text evidence="1">Homodimer; the beta-strands of each monomer intercalate to form a hydrophobic core, while the alpha-helices form wings that extend away from the core.</text>
</comment>
<comment type="subcellular location">
    <subcellularLocation>
        <location evidence="1">Cytoplasm</location>
    </subcellularLocation>
</comment>
<comment type="similarity">
    <text evidence="1">Belongs to the CsrA/RsmA family.</text>
</comment>
<gene>
    <name evidence="1" type="primary">csrA</name>
    <name type="ordered locus">ECSE_2944</name>
</gene>
<keyword id="KW-0010">Activator</keyword>
<keyword id="KW-0963">Cytoplasm</keyword>
<keyword id="KW-0678">Repressor</keyword>
<keyword id="KW-0694">RNA-binding</keyword>
<keyword id="KW-0810">Translation regulation</keyword>
<protein>
    <recommendedName>
        <fullName evidence="1">Translational regulator CsrA</fullName>
    </recommendedName>
    <alternativeName>
        <fullName evidence="1">Carbon storage regulator</fullName>
    </alternativeName>
</protein>
<evidence type="ECO:0000255" key="1">
    <source>
        <dbReference type="HAMAP-Rule" id="MF_00167"/>
    </source>
</evidence>